<dbReference type="EMBL" id="BA000001">
    <property type="protein sequence ID" value="BAA31116.1"/>
    <property type="molecule type" value="Genomic_DNA"/>
</dbReference>
<dbReference type="PIR" id="E71215">
    <property type="entry name" value="E71215"/>
</dbReference>
<dbReference type="RefSeq" id="WP_010886051.1">
    <property type="nucleotide sequence ID" value="NC_000961.1"/>
</dbReference>
<dbReference type="SMR" id="O57713"/>
<dbReference type="STRING" id="70601.gene:9379002"/>
<dbReference type="EnsemblBacteria" id="BAA31116">
    <property type="protein sequence ID" value="BAA31116"/>
    <property type="gene ID" value="BAA31116"/>
</dbReference>
<dbReference type="GeneID" id="1442833"/>
<dbReference type="KEGG" id="pho:PH1989"/>
<dbReference type="eggNOG" id="arCOG00899">
    <property type="taxonomic scope" value="Archaea"/>
</dbReference>
<dbReference type="OrthoDB" id="15513at2157"/>
<dbReference type="Proteomes" id="UP000000752">
    <property type="component" value="Chromosome"/>
</dbReference>
<dbReference type="GO" id="GO:0005886">
    <property type="term" value="C:plasma membrane"/>
    <property type="evidence" value="ECO:0007669"/>
    <property type="project" value="UniProtKB-SubCell"/>
</dbReference>
<dbReference type="InterPro" id="IPR022791">
    <property type="entry name" value="L-PG_synthase/AglD"/>
</dbReference>
<dbReference type="NCBIfam" id="TIGR00374">
    <property type="entry name" value="flippase-like domain"/>
    <property type="match status" value="1"/>
</dbReference>
<dbReference type="PANTHER" id="PTHR39087">
    <property type="entry name" value="UPF0104 MEMBRANE PROTEIN MJ1595"/>
    <property type="match status" value="1"/>
</dbReference>
<dbReference type="PANTHER" id="PTHR39087:SF2">
    <property type="entry name" value="UPF0104 MEMBRANE PROTEIN MJ1595"/>
    <property type="match status" value="1"/>
</dbReference>
<dbReference type="Pfam" id="PF03706">
    <property type="entry name" value="LPG_synthase_TM"/>
    <property type="match status" value="1"/>
</dbReference>
<gene>
    <name type="ordered locus">PH1989</name>
</gene>
<protein>
    <recommendedName>
        <fullName>UPF0104 membrane protein PH1989</fullName>
    </recommendedName>
</protein>
<evidence type="ECO:0000255" key="1"/>
<evidence type="ECO:0000305" key="2"/>
<name>Y1989_PYRHO</name>
<keyword id="KW-1003">Cell membrane</keyword>
<keyword id="KW-0472">Membrane</keyword>
<keyword id="KW-0812">Transmembrane</keyword>
<keyword id="KW-1133">Transmembrane helix</keyword>
<proteinExistence type="inferred from homology"/>
<feature type="chain" id="PRO_0000138109" description="UPF0104 membrane protein PH1989">
    <location>
        <begin position="1"/>
        <end position="335"/>
    </location>
</feature>
<feature type="transmembrane region" description="Helical" evidence="1">
    <location>
        <begin position="4"/>
        <end position="24"/>
    </location>
</feature>
<feature type="transmembrane region" description="Helical" evidence="1">
    <location>
        <begin position="34"/>
        <end position="54"/>
    </location>
</feature>
<feature type="transmembrane region" description="Helical" evidence="1">
    <location>
        <begin position="62"/>
        <end position="82"/>
    </location>
</feature>
<feature type="transmembrane region" description="Helical" evidence="1">
    <location>
        <begin position="122"/>
        <end position="142"/>
    </location>
</feature>
<feature type="transmembrane region" description="Helical" evidence="1">
    <location>
        <begin position="148"/>
        <end position="168"/>
    </location>
</feature>
<feature type="transmembrane region" description="Helical" evidence="1">
    <location>
        <begin position="231"/>
        <end position="251"/>
    </location>
</feature>
<feature type="transmembrane region" description="Helical" evidence="1">
    <location>
        <begin position="266"/>
        <end position="286"/>
    </location>
</feature>
<feature type="transmembrane region" description="Helical" evidence="1">
    <location>
        <begin position="304"/>
        <end position="324"/>
    </location>
</feature>
<sequence length="335" mass="37503">MKKYLLIIIGVTLVLILLWWAGIERTIKLMMRADIRFILLAILMYCISVLIWAVRWNTFLKGANINVSFVKVIEGVFIGIFLNNLTPGARTGGEAVKVIFIKKASSNGSYSKVFATVIADRILDVIPVVVFMMLAFLYALTIHARVLLIILGISAIILVIILLMTTVFSIKEKYALSALLYLARIFRKIFPSKFSMSEDKIKEKLLGEIREFKETFLRLAKRKRRLSSTMLYSFILWGADILKTYFIFLSLGGRITFLQVLLVRMASIAVAMISVIPGGIGITEVVQSALFLAVGVEKALAVSVTMLDRLISFWIPTLLGGILVLKNRKLLVSSS</sequence>
<organism>
    <name type="scientific">Pyrococcus horikoshii (strain ATCC 700860 / DSM 12428 / JCM 9974 / NBRC 100139 / OT-3)</name>
    <dbReference type="NCBI Taxonomy" id="70601"/>
    <lineage>
        <taxon>Archaea</taxon>
        <taxon>Methanobacteriati</taxon>
        <taxon>Methanobacteriota</taxon>
        <taxon>Thermococci</taxon>
        <taxon>Thermococcales</taxon>
        <taxon>Thermococcaceae</taxon>
        <taxon>Pyrococcus</taxon>
    </lineage>
</organism>
<accession>O57713</accession>
<reference key="1">
    <citation type="journal article" date="1998" name="DNA Res.">
        <title>Complete sequence and gene organization of the genome of a hyper-thermophilic archaebacterium, Pyrococcus horikoshii OT3.</title>
        <authorList>
            <person name="Kawarabayasi Y."/>
            <person name="Sawada M."/>
            <person name="Horikawa H."/>
            <person name="Haikawa Y."/>
            <person name="Hino Y."/>
            <person name="Yamamoto S."/>
            <person name="Sekine M."/>
            <person name="Baba S."/>
            <person name="Kosugi H."/>
            <person name="Hosoyama A."/>
            <person name="Nagai Y."/>
            <person name="Sakai M."/>
            <person name="Ogura K."/>
            <person name="Otsuka R."/>
            <person name="Nakazawa H."/>
            <person name="Takamiya M."/>
            <person name="Ohfuku Y."/>
            <person name="Funahashi T."/>
            <person name="Tanaka T."/>
            <person name="Kudoh Y."/>
            <person name="Yamazaki J."/>
            <person name="Kushida N."/>
            <person name="Oguchi A."/>
            <person name="Aoki K."/>
            <person name="Yoshizawa T."/>
            <person name="Nakamura Y."/>
            <person name="Robb F.T."/>
            <person name="Horikoshi K."/>
            <person name="Masuchi Y."/>
            <person name="Shizuya H."/>
            <person name="Kikuchi H."/>
        </authorList>
    </citation>
    <scope>NUCLEOTIDE SEQUENCE [LARGE SCALE GENOMIC DNA]</scope>
    <source>
        <strain>ATCC 700860 / DSM 12428 / JCM 9974 / NBRC 100139 / OT-3</strain>
    </source>
</reference>
<comment type="subcellular location">
    <subcellularLocation>
        <location evidence="2">Cell membrane</location>
        <topology evidence="2">Multi-pass membrane protein</topology>
    </subcellularLocation>
</comment>
<comment type="similarity">
    <text evidence="2">Belongs to the UPF0104 family.</text>
</comment>